<gene>
    <name evidence="1" type="primary">rpmI</name>
    <name type="ordered locus">UPA3_0236</name>
</gene>
<organism>
    <name type="scientific">Ureaplasma parvum serovar 3 (strain ATCC 27815 / 27 / NCTC 11736)</name>
    <dbReference type="NCBI Taxonomy" id="505682"/>
    <lineage>
        <taxon>Bacteria</taxon>
        <taxon>Bacillati</taxon>
        <taxon>Mycoplasmatota</taxon>
        <taxon>Mycoplasmoidales</taxon>
        <taxon>Mycoplasmoidaceae</taxon>
        <taxon>Ureaplasma</taxon>
    </lineage>
</organism>
<name>RL35_UREP2</name>
<keyword id="KW-0687">Ribonucleoprotein</keyword>
<keyword id="KW-0689">Ribosomal protein</keyword>
<comment type="similarity">
    <text evidence="1">Belongs to the bacterial ribosomal protein bL35 family.</text>
</comment>
<protein>
    <recommendedName>
        <fullName evidence="1">Large ribosomal subunit protein bL35</fullName>
    </recommendedName>
    <alternativeName>
        <fullName evidence="2">50S ribosomal protein L35</fullName>
    </alternativeName>
</protein>
<feature type="chain" id="PRO_1000081635" description="Large ribosomal subunit protein bL35">
    <location>
        <begin position="1"/>
        <end position="64"/>
    </location>
</feature>
<proteinExistence type="inferred from homology"/>
<dbReference type="EMBL" id="CP000942">
    <property type="protein sequence ID" value="ACA33288.1"/>
    <property type="molecule type" value="Genomic_DNA"/>
</dbReference>
<dbReference type="RefSeq" id="WP_006688895.1">
    <property type="nucleotide sequence ID" value="NC_010503.1"/>
</dbReference>
<dbReference type="SMR" id="B1AIL7"/>
<dbReference type="GeneID" id="29672671"/>
<dbReference type="KEGG" id="upa:UPA3_0236"/>
<dbReference type="HOGENOM" id="CLU_169643_3_0_14"/>
<dbReference type="Proteomes" id="UP000002162">
    <property type="component" value="Chromosome"/>
</dbReference>
<dbReference type="GO" id="GO:0022625">
    <property type="term" value="C:cytosolic large ribosomal subunit"/>
    <property type="evidence" value="ECO:0007669"/>
    <property type="project" value="TreeGrafter"/>
</dbReference>
<dbReference type="GO" id="GO:0003735">
    <property type="term" value="F:structural constituent of ribosome"/>
    <property type="evidence" value="ECO:0007669"/>
    <property type="project" value="InterPro"/>
</dbReference>
<dbReference type="GO" id="GO:0006412">
    <property type="term" value="P:translation"/>
    <property type="evidence" value="ECO:0007669"/>
    <property type="project" value="UniProtKB-UniRule"/>
</dbReference>
<dbReference type="FunFam" id="4.10.410.60:FF:000001">
    <property type="entry name" value="50S ribosomal protein L35"/>
    <property type="match status" value="1"/>
</dbReference>
<dbReference type="Gene3D" id="4.10.410.60">
    <property type="match status" value="1"/>
</dbReference>
<dbReference type="HAMAP" id="MF_00514">
    <property type="entry name" value="Ribosomal_bL35"/>
    <property type="match status" value="1"/>
</dbReference>
<dbReference type="InterPro" id="IPR001706">
    <property type="entry name" value="Ribosomal_bL35"/>
</dbReference>
<dbReference type="InterPro" id="IPR021137">
    <property type="entry name" value="Ribosomal_bL35-like"/>
</dbReference>
<dbReference type="InterPro" id="IPR018265">
    <property type="entry name" value="Ribosomal_bL35_CS"/>
</dbReference>
<dbReference type="InterPro" id="IPR037229">
    <property type="entry name" value="Ribosomal_bL35_sf"/>
</dbReference>
<dbReference type="NCBIfam" id="TIGR00001">
    <property type="entry name" value="rpmI_bact"/>
    <property type="match status" value="1"/>
</dbReference>
<dbReference type="PANTHER" id="PTHR33343">
    <property type="entry name" value="54S RIBOSOMAL PROTEIN BL35M"/>
    <property type="match status" value="1"/>
</dbReference>
<dbReference type="PANTHER" id="PTHR33343:SF1">
    <property type="entry name" value="LARGE RIBOSOMAL SUBUNIT PROTEIN BL35M"/>
    <property type="match status" value="1"/>
</dbReference>
<dbReference type="Pfam" id="PF01632">
    <property type="entry name" value="Ribosomal_L35p"/>
    <property type="match status" value="1"/>
</dbReference>
<dbReference type="PRINTS" id="PR00064">
    <property type="entry name" value="RIBOSOMALL35"/>
</dbReference>
<dbReference type="SUPFAM" id="SSF143034">
    <property type="entry name" value="L35p-like"/>
    <property type="match status" value="1"/>
</dbReference>
<dbReference type="PROSITE" id="PS00936">
    <property type="entry name" value="RIBOSOMAL_L35"/>
    <property type="match status" value="1"/>
</dbReference>
<sequence length="64" mass="7471">MAKIRQKTKRAVAKRFSITKNGKLKRKHAYRSHLALGRSTKAKRHLRKDAIMSTSDTKRYTQCL</sequence>
<accession>B1AIL7</accession>
<reference key="1">
    <citation type="submission" date="2008-02" db="EMBL/GenBank/DDBJ databases">
        <title>Genome sequence of Ureaplasma parvum serovar 3.</title>
        <authorList>
            <person name="Methe B.A."/>
            <person name="Glass J."/>
            <person name="Waites K."/>
            <person name="Shrivastava S."/>
        </authorList>
    </citation>
    <scope>NUCLEOTIDE SEQUENCE [LARGE SCALE GENOMIC DNA]</scope>
    <source>
        <strain>ATCC 27815 / 27 / NCTC 11736</strain>
    </source>
</reference>
<evidence type="ECO:0000255" key="1">
    <source>
        <dbReference type="HAMAP-Rule" id="MF_00514"/>
    </source>
</evidence>
<evidence type="ECO:0000305" key="2"/>